<sequence length="119" mass="13513">MNLAAYYPVLLFLLVGTGLGIALVSIGKILGPNKPDSEKNAPYECGFEAFEDARMKFDVRYYLVAILFIIFDLETAFLFPWGVALREIGWPGFIAMMIFLLEFLLGFAYIWKKGGLDWE</sequence>
<gene>
    <name evidence="1" type="primary">nuoA</name>
    <name type="ordered locus">BMASAVP1_A1130</name>
</gene>
<feature type="chain" id="PRO_0000362642" description="NADH-quinone oxidoreductase subunit A">
    <location>
        <begin position="1"/>
        <end position="119"/>
    </location>
</feature>
<feature type="transmembrane region" description="Helical" evidence="1">
    <location>
        <begin position="7"/>
        <end position="27"/>
    </location>
</feature>
<feature type="transmembrane region" description="Helical" evidence="1">
    <location>
        <begin position="63"/>
        <end position="83"/>
    </location>
</feature>
<feature type="transmembrane region" description="Helical" evidence="1">
    <location>
        <begin position="88"/>
        <end position="108"/>
    </location>
</feature>
<keyword id="KW-0997">Cell inner membrane</keyword>
<keyword id="KW-1003">Cell membrane</keyword>
<keyword id="KW-0472">Membrane</keyword>
<keyword id="KW-0520">NAD</keyword>
<keyword id="KW-0874">Quinone</keyword>
<keyword id="KW-1278">Translocase</keyword>
<keyword id="KW-0812">Transmembrane</keyword>
<keyword id="KW-1133">Transmembrane helix</keyword>
<keyword id="KW-0813">Transport</keyword>
<keyword id="KW-0830">Ubiquinone</keyword>
<reference key="1">
    <citation type="journal article" date="2010" name="Genome Biol. Evol.">
        <title>Continuing evolution of Burkholderia mallei through genome reduction and large-scale rearrangements.</title>
        <authorList>
            <person name="Losada L."/>
            <person name="Ronning C.M."/>
            <person name="DeShazer D."/>
            <person name="Woods D."/>
            <person name="Fedorova N."/>
            <person name="Kim H.S."/>
            <person name="Shabalina S.A."/>
            <person name="Pearson T.R."/>
            <person name="Brinkac L."/>
            <person name="Tan P."/>
            <person name="Nandi T."/>
            <person name="Crabtree J."/>
            <person name="Badger J."/>
            <person name="Beckstrom-Sternberg S."/>
            <person name="Saqib M."/>
            <person name="Schutzer S.E."/>
            <person name="Keim P."/>
            <person name="Nierman W.C."/>
        </authorList>
    </citation>
    <scope>NUCLEOTIDE SEQUENCE [LARGE SCALE GENOMIC DNA]</scope>
    <source>
        <strain>SAVP1</strain>
    </source>
</reference>
<evidence type="ECO:0000255" key="1">
    <source>
        <dbReference type="HAMAP-Rule" id="MF_01394"/>
    </source>
</evidence>
<proteinExistence type="inferred from homology"/>
<name>NUOA_BURMS</name>
<protein>
    <recommendedName>
        <fullName evidence="1">NADH-quinone oxidoreductase subunit A</fullName>
        <ecNumber evidence="1">7.1.1.-</ecNumber>
    </recommendedName>
    <alternativeName>
        <fullName evidence="1">NADH dehydrogenase I subunit A</fullName>
    </alternativeName>
    <alternativeName>
        <fullName evidence="1">NDH-1 subunit A</fullName>
    </alternativeName>
    <alternativeName>
        <fullName evidence="1">NUO1</fullName>
    </alternativeName>
</protein>
<accession>A1V2L6</accession>
<comment type="function">
    <text evidence="1">NDH-1 shuttles electrons from NADH, via FMN and iron-sulfur (Fe-S) centers, to quinones in the respiratory chain. The immediate electron acceptor for the enzyme in this species is believed to be ubiquinone. Couples the redox reaction to proton translocation (for every two electrons transferred, four hydrogen ions are translocated across the cytoplasmic membrane), and thus conserves the redox energy in a proton gradient.</text>
</comment>
<comment type="catalytic activity">
    <reaction evidence="1">
        <text>a quinone + NADH + 5 H(+)(in) = a quinol + NAD(+) + 4 H(+)(out)</text>
        <dbReference type="Rhea" id="RHEA:57888"/>
        <dbReference type="ChEBI" id="CHEBI:15378"/>
        <dbReference type="ChEBI" id="CHEBI:24646"/>
        <dbReference type="ChEBI" id="CHEBI:57540"/>
        <dbReference type="ChEBI" id="CHEBI:57945"/>
        <dbReference type="ChEBI" id="CHEBI:132124"/>
    </reaction>
</comment>
<comment type="subunit">
    <text evidence="1">NDH-1 is composed of 14 different subunits. Subunits NuoA, H, J, K, L, M, N constitute the membrane sector of the complex.</text>
</comment>
<comment type="subcellular location">
    <subcellularLocation>
        <location evidence="1">Cell inner membrane</location>
        <topology evidence="1">Multi-pass membrane protein</topology>
    </subcellularLocation>
</comment>
<comment type="similarity">
    <text evidence="1">Belongs to the complex I subunit 3 family.</text>
</comment>
<dbReference type="EC" id="7.1.1.-" evidence="1"/>
<dbReference type="EMBL" id="CP000526">
    <property type="protein sequence ID" value="ABM51162.1"/>
    <property type="molecule type" value="Genomic_DNA"/>
</dbReference>
<dbReference type="RefSeq" id="WP_004186624.1">
    <property type="nucleotide sequence ID" value="NC_008785.1"/>
</dbReference>
<dbReference type="SMR" id="A1V2L6"/>
<dbReference type="KEGG" id="bmv:BMASAVP1_A1130"/>
<dbReference type="HOGENOM" id="CLU_119549_3_1_4"/>
<dbReference type="GO" id="GO:0030964">
    <property type="term" value="C:NADH dehydrogenase complex"/>
    <property type="evidence" value="ECO:0007669"/>
    <property type="project" value="TreeGrafter"/>
</dbReference>
<dbReference type="GO" id="GO:0005886">
    <property type="term" value="C:plasma membrane"/>
    <property type="evidence" value="ECO:0007669"/>
    <property type="project" value="UniProtKB-SubCell"/>
</dbReference>
<dbReference type="GO" id="GO:0008137">
    <property type="term" value="F:NADH dehydrogenase (ubiquinone) activity"/>
    <property type="evidence" value="ECO:0007669"/>
    <property type="project" value="InterPro"/>
</dbReference>
<dbReference type="GO" id="GO:0050136">
    <property type="term" value="F:NADH:ubiquinone reductase (non-electrogenic) activity"/>
    <property type="evidence" value="ECO:0007669"/>
    <property type="project" value="UniProtKB-UniRule"/>
</dbReference>
<dbReference type="GO" id="GO:0048038">
    <property type="term" value="F:quinone binding"/>
    <property type="evidence" value="ECO:0007669"/>
    <property type="project" value="UniProtKB-KW"/>
</dbReference>
<dbReference type="FunFam" id="1.20.58.1610:FF:000004">
    <property type="entry name" value="NADH-quinone oxidoreductase subunit A"/>
    <property type="match status" value="1"/>
</dbReference>
<dbReference type="Gene3D" id="1.20.58.1610">
    <property type="entry name" value="NADH:ubiquinone/plastoquinone oxidoreductase, chain 3"/>
    <property type="match status" value="1"/>
</dbReference>
<dbReference type="HAMAP" id="MF_01394">
    <property type="entry name" value="NDH1_NuoA"/>
    <property type="match status" value="1"/>
</dbReference>
<dbReference type="InterPro" id="IPR023043">
    <property type="entry name" value="NAD(P)H_OxRDtase_bac/plastid"/>
</dbReference>
<dbReference type="InterPro" id="IPR000440">
    <property type="entry name" value="NADH_UbQ/plastoQ_OxRdtase_su3"/>
</dbReference>
<dbReference type="InterPro" id="IPR038430">
    <property type="entry name" value="NDAH_ubi_oxred_su3_sf"/>
</dbReference>
<dbReference type="PANTHER" id="PTHR11058">
    <property type="entry name" value="NADH-UBIQUINONE OXIDOREDUCTASE CHAIN 3"/>
    <property type="match status" value="1"/>
</dbReference>
<dbReference type="PANTHER" id="PTHR11058:SF9">
    <property type="entry name" value="NADH-UBIQUINONE OXIDOREDUCTASE CHAIN 3"/>
    <property type="match status" value="1"/>
</dbReference>
<dbReference type="Pfam" id="PF00507">
    <property type="entry name" value="Oxidored_q4"/>
    <property type="match status" value="1"/>
</dbReference>
<organism>
    <name type="scientific">Burkholderia mallei (strain SAVP1)</name>
    <dbReference type="NCBI Taxonomy" id="320388"/>
    <lineage>
        <taxon>Bacteria</taxon>
        <taxon>Pseudomonadati</taxon>
        <taxon>Pseudomonadota</taxon>
        <taxon>Betaproteobacteria</taxon>
        <taxon>Burkholderiales</taxon>
        <taxon>Burkholderiaceae</taxon>
        <taxon>Burkholderia</taxon>
        <taxon>pseudomallei group</taxon>
    </lineage>
</organism>